<gene>
    <name type="ORF">GM10129</name>
</gene>
<reference key="1">
    <citation type="journal article" date="2007" name="Nature">
        <title>Evolution of genes and genomes on the Drosophila phylogeny.</title>
        <authorList>
            <consortium name="Drosophila 12 genomes consortium"/>
        </authorList>
    </citation>
    <scope>NUCLEOTIDE SEQUENCE [LARGE SCALE GENOMIC DNA]</scope>
    <source>
        <strain>Rob3c / Tucson 14021-0248.25</strain>
    </source>
</reference>
<sequence length="975" mass="106909">MQSADDKSLLARFFHADRSLTAVASELDSFDGRAEPDRCTRLVSRLRQNQDKVLAITNLIMEELLGEDRDPRAFRAKFPEEVLQENLAGQLWFGAECLAAGSSIMNRESESKEMRPLAQAVTKSLGNVRVLLRDQCLKNNVPNSKTLHLDLNDSTTEQLYESLKIFDRLFAEFELSYVSAMVQVKSRHEYEMQQWIGVLFSETLQRALKIGLLDQEMVDAFDPGLMFSIPRLAIVAGLVVYAKGPLNMDMPGDQLSEMFRPFRTILIKIRDLLRNLNNQELYQLEKLLCTNEDINTKVPLGSSSIEAPSPEHSSHPTTSSTQNNNNSSNNNHSSSSTNTTSTTITTAGTTNTHRTVERLVDQRNNNHNSNSNSSSNPTVEGATLRSPSMLSLSTTSTPTASPTPSPTPSHSIASTSSAATSSTNPPADWSDGDDEDEDDDDIDVDEEDPESSDDGTDEEQLLKDIVAADCASGYLIPNTNLGNLLQPQEVPLTDNFVASEDDEYGTAEQQGHQGLEEEEPSTSAAMLAATRTLQRLRLPSSDNEPLAEPTTIKASEEHMQQPSGRHHRHHQSHHHHHHHRHSHQHQHRQPHPHRTTRSGRKRCSLEAADPETIQPEREQNLASGDTSAASSLSDDVSLAMRNTTARLKFKSTENLLHRLFVCIAGVADQLQTNFASDLRQILRSVFLMNMSAAQEDIDIPEKTKESELFEFRASENDVIQESAGSNQSIYSAEEVNPELDNVFSAGGGNQATGQRHSAGASMQRNNTIDLASQPGEGSPSGATTTTSRSHVTRSRSLGDQEAASSATSSTAQLRQLEQQQQQQQLQIQLQRQRNNSVGSNTPSSASSTSSSSEQNSPVSARSGSRRRLQSNNETQMPSSATSTSATLSPPAWIPDGKAPRCMACQTPFTAFRRRHHCRNCGGVFCGVCSNASAPLPKYGLTKAVRVCRDCYVREVRSGMGVQGVQSVQSVQASAS</sequence>
<proteinExistence type="inferred from homology"/>
<accession>B4IC49</accession>
<organism>
    <name type="scientific">Drosophila sechellia</name>
    <name type="common">Fruit fly</name>
    <dbReference type="NCBI Taxonomy" id="7238"/>
    <lineage>
        <taxon>Eukaryota</taxon>
        <taxon>Metazoa</taxon>
        <taxon>Ecdysozoa</taxon>
        <taxon>Arthropoda</taxon>
        <taxon>Hexapoda</taxon>
        <taxon>Insecta</taxon>
        <taxon>Pterygota</taxon>
        <taxon>Neoptera</taxon>
        <taxon>Endopterygota</taxon>
        <taxon>Diptera</taxon>
        <taxon>Brachycera</taxon>
        <taxon>Muscomorpha</taxon>
        <taxon>Ephydroidea</taxon>
        <taxon>Drosophilidae</taxon>
        <taxon>Drosophila</taxon>
        <taxon>Sophophora</taxon>
    </lineage>
</organism>
<dbReference type="EMBL" id="CH480828">
    <property type="protein sequence ID" value="EDW45207.1"/>
    <property type="molecule type" value="Genomic_DNA"/>
</dbReference>
<dbReference type="RefSeq" id="XP_002041469.1">
    <property type="nucleotide sequence ID" value="XM_002041433.1"/>
</dbReference>
<dbReference type="SMR" id="B4IC49"/>
<dbReference type="EnsemblMetazoa" id="FBtr0193114">
    <property type="protein sequence ID" value="FBpp0191606"/>
    <property type="gene ID" value="FBgn0165080"/>
</dbReference>
<dbReference type="EnsemblMetazoa" id="XM_032720701.1">
    <property type="protein sequence ID" value="XP_032576592.1"/>
    <property type="gene ID" value="LOC6617142"/>
</dbReference>
<dbReference type="HOGENOM" id="CLU_007360_1_0_1"/>
<dbReference type="OMA" id="CYVREVQ"/>
<dbReference type="PhylomeDB" id="B4IC49"/>
<dbReference type="Proteomes" id="UP000001292">
    <property type="component" value="Unassembled WGS sequence"/>
</dbReference>
<dbReference type="GO" id="GO:0031901">
    <property type="term" value="C:early endosome membrane"/>
    <property type="evidence" value="ECO:0007669"/>
    <property type="project" value="TreeGrafter"/>
</dbReference>
<dbReference type="GO" id="GO:0008270">
    <property type="term" value="F:zinc ion binding"/>
    <property type="evidence" value="ECO:0007669"/>
    <property type="project" value="UniProtKB-KW"/>
</dbReference>
<dbReference type="CDD" id="cd15731">
    <property type="entry name" value="FYVE_LST2"/>
    <property type="match status" value="1"/>
</dbReference>
<dbReference type="FunFam" id="3.30.40.10:FF:000073">
    <property type="entry name" value="myotubularin-related protein 4 isoform X2"/>
    <property type="match status" value="1"/>
</dbReference>
<dbReference type="Gene3D" id="3.30.40.10">
    <property type="entry name" value="Zinc/RING finger domain, C3HC4 (zinc finger)"/>
    <property type="match status" value="1"/>
</dbReference>
<dbReference type="InterPro" id="IPR043269">
    <property type="entry name" value="FYVE_LST2"/>
</dbReference>
<dbReference type="InterPro" id="IPR051118">
    <property type="entry name" value="LST-2"/>
</dbReference>
<dbReference type="InterPro" id="IPR000306">
    <property type="entry name" value="Znf_FYVE"/>
</dbReference>
<dbReference type="InterPro" id="IPR017455">
    <property type="entry name" value="Znf_FYVE-rel"/>
</dbReference>
<dbReference type="InterPro" id="IPR011011">
    <property type="entry name" value="Znf_FYVE_PHD"/>
</dbReference>
<dbReference type="InterPro" id="IPR013083">
    <property type="entry name" value="Znf_RING/FYVE/PHD"/>
</dbReference>
<dbReference type="PANTHER" id="PTHR46465">
    <property type="entry name" value="LATERAL SIGNALING TARGET PROTEIN 2 HOMOLOG"/>
    <property type="match status" value="1"/>
</dbReference>
<dbReference type="PANTHER" id="PTHR46465:SF2">
    <property type="entry name" value="LATERAL SIGNALING TARGET PROTEIN 2 HOMOLOG"/>
    <property type="match status" value="1"/>
</dbReference>
<dbReference type="Pfam" id="PF01363">
    <property type="entry name" value="FYVE"/>
    <property type="match status" value="1"/>
</dbReference>
<dbReference type="SMART" id="SM00064">
    <property type="entry name" value="FYVE"/>
    <property type="match status" value="1"/>
</dbReference>
<dbReference type="SUPFAM" id="SSF57903">
    <property type="entry name" value="FYVE/PHD zinc finger"/>
    <property type="match status" value="1"/>
</dbReference>
<dbReference type="PROSITE" id="PS50178">
    <property type="entry name" value="ZF_FYVE"/>
    <property type="match status" value="1"/>
</dbReference>
<evidence type="ECO:0000250" key="1"/>
<evidence type="ECO:0000255" key="2">
    <source>
        <dbReference type="PROSITE-ProRule" id="PRU00091"/>
    </source>
</evidence>
<evidence type="ECO:0000256" key="3">
    <source>
        <dbReference type="SAM" id="MobiDB-lite"/>
    </source>
</evidence>
<evidence type="ECO:0000305" key="4"/>
<comment type="function">
    <text evidence="1">Negative regulator of epidermal growth factor receptor (EGFR) signaling.</text>
</comment>
<comment type="similarity">
    <text evidence="4">Belongs to the lst-2 family.</text>
</comment>
<name>LST2_DROSE</name>
<protein>
    <recommendedName>
        <fullName>Lateral signaling target protein 2 homolog</fullName>
    </recommendedName>
</protein>
<keyword id="KW-0479">Metal-binding</keyword>
<keyword id="KW-0597">Phosphoprotein</keyword>
<keyword id="KW-1185">Reference proteome</keyword>
<keyword id="KW-0862">Zinc</keyword>
<keyword id="KW-0863">Zinc-finger</keyword>
<feature type="chain" id="PRO_0000378968" description="Lateral signaling target protein 2 homolog">
    <location>
        <begin position="1"/>
        <end position="975"/>
    </location>
</feature>
<feature type="zinc finger region" description="FYVE-type" evidence="2">
    <location>
        <begin position="895"/>
        <end position="955"/>
    </location>
</feature>
<feature type="region of interest" description="Disordered" evidence="3">
    <location>
        <begin position="299"/>
        <end position="458"/>
    </location>
</feature>
<feature type="region of interest" description="Disordered" evidence="3">
    <location>
        <begin position="504"/>
        <end position="523"/>
    </location>
</feature>
<feature type="region of interest" description="Disordered" evidence="3">
    <location>
        <begin position="556"/>
        <end position="633"/>
    </location>
</feature>
<feature type="region of interest" description="Disordered" evidence="3">
    <location>
        <begin position="740"/>
        <end position="891"/>
    </location>
</feature>
<feature type="compositionally biased region" description="Low complexity" evidence="3">
    <location>
        <begin position="302"/>
        <end position="352"/>
    </location>
</feature>
<feature type="compositionally biased region" description="Low complexity" evidence="3">
    <location>
        <begin position="365"/>
        <end position="376"/>
    </location>
</feature>
<feature type="compositionally biased region" description="Low complexity" evidence="3">
    <location>
        <begin position="383"/>
        <end position="400"/>
    </location>
</feature>
<feature type="compositionally biased region" description="Low complexity" evidence="3">
    <location>
        <begin position="408"/>
        <end position="429"/>
    </location>
</feature>
<feature type="compositionally biased region" description="Acidic residues" evidence="3">
    <location>
        <begin position="430"/>
        <end position="458"/>
    </location>
</feature>
<feature type="compositionally biased region" description="Basic residues" evidence="3">
    <location>
        <begin position="564"/>
        <end position="602"/>
    </location>
</feature>
<feature type="compositionally biased region" description="Low complexity" evidence="3">
    <location>
        <begin position="621"/>
        <end position="633"/>
    </location>
</feature>
<feature type="compositionally biased region" description="Polar residues" evidence="3">
    <location>
        <begin position="751"/>
        <end position="770"/>
    </location>
</feature>
<feature type="compositionally biased region" description="Low complexity" evidence="3">
    <location>
        <begin position="802"/>
        <end position="860"/>
    </location>
</feature>
<feature type="compositionally biased region" description="Low complexity" evidence="3">
    <location>
        <begin position="877"/>
        <end position="890"/>
    </location>
</feature>
<feature type="binding site" evidence="2">
    <location>
        <position position="901"/>
    </location>
    <ligand>
        <name>Zn(2+)</name>
        <dbReference type="ChEBI" id="CHEBI:29105"/>
        <label>1</label>
    </ligand>
</feature>
<feature type="binding site" evidence="2">
    <location>
        <position position="904"/>
    </location>
    <ligand>
        <name>Zn(2+)</name>
        <dbReference type="ChEBI" id="CHEBI:29105"/>
        <label>1</label>
    </ligand>
</feature>
<feature type="binding site" evidence="2">
    <location>
        <position position="917"/>
    </location>
    <ligand>
        <name>Zn(2+)</name>
        <dbReference type="ChEBI" id="CHEBI:29105"/>
        <label>2</label>
    </ligand>
</feature>
<feature type="binding site" evidence="2">
    <location>
        <position position="920"/>
    </location>
    <ligand>
        <name>Zn(2+)</name>
        <dbReference type="ChEBI" id="CHEBI:29105"/>
        <label>2</label>
    </ligand>
</feature>
<feature type="binding site" evidence="2">
    <location>
        <position position="925"/>
    </location>
    <ligand>
        <name>Zn(2+)</name>
        <dbReference type="ChEBI" id="CHEBI:29105"/>
        <label>1</label>
    </ligand>
</feature>
<feature type="binding site" evidence="2">
    <location>
        <position position="928"/>
    </location>
    <ligand>
        <name>Zn(2+)</name>
        <dbReference type="ChEBI" id="CHEBI:29105"/>
        <label>1</label>
    </ligand>
</feature>
<feature type="binding site" evidence="2">
    <location>
        <position position="947"/>
    </location>
    <ligand>
        <name>Zn(2+)</name>
        <dbReference type="ChEBI" id="CHEBI:29105"/>
        <label>2</label>
    </ligand>
</feature>
<feature type="binding site" evidence="2">
    <location>
        <position position="950"/>
    </location>
    <ligand>
        <name>Zn(2+)</name>
        <dbReference type="ChEBI" id="CHEBI:29105"/>
        <label>2</label>
    </ligand>
</feature>
<feature type="modified residue" description="Phosphoserine" evidence="1">
    <location>
        <position position="540"/>
    </location>
</feature>
<feature type="modified residue" description="Phosphoserine" evidence="1">
    <location>
        <position position="541"/>
    </location>
</feature>
<feature type="modified residue" description="Phosphoserine" evidence="1">
    <location>
        <position position="796"/>
    </location>
</feature>